<evidence type="ECO:0000250" key="1"/>
<evidence type="ECO:0000255" key="2"/>
<evidence type="ECO:0000305" key="3"/>
<reference key="1">
    <citation type="journal article" date="2004" name="Proc. Natl. Acad. Sci. U.S.A.">
        <title>Genome sequence of Picrophilus torridus and its implications for life around pH 0.</title>
        <authorList>
            <person name="Fuetterer O."/>
            <person name="Angelov A."/>
            <person name="Liesegang H."/>
            <person name="Gottschalk G."/>
            <person name="Schleper C."/>
            <person name="Schepers B."/>
            <person name="Dock C."/>
            <person name="Antranikian G."/>
            <person name="Liebl W."/>
        </authorList>
    </citation>
    <scope>NUCLEOTIDE SEQUENCE [LARGE SCALE GENOMIC DNA]</scope>
    <source>
        <strain>ATCC 700027 / DSM 9790 / JCM 10055 / NBRC 100828 / KAW 2/3</strain>
    </source>
</reference>
<gene>
    <name type="ordered locus">PTO1429</name>
</gene>
<protein>
    <recommendedName>
        <fullName>Bifunctional methyltransferase/endonuclease</fullName>
    </recommendedName>
    <domain>
        <recommendedName>
            <fullName>Probable methylated-DNA--protein-cysteine methyltransferase</fullName>
            <ecNumber>2.1.1.-</ecNumber>
        </recommendedName>
        <alternativeName>
            <fullName>O-6-methylbase-DNA-alkyltransferase</fullName>
        </alternativeName>
    </domain>
    <domain>
        <recommendedName>
            <fullName>Endonuclease V</fullName>
            <ecNumber>3.1.21.7</ecNumber>
        </recommendedName>
        <alternativeName>
            <fullName>Deoxyinosine 3'endonuclease</fullName>
        </alternativeName>
        <alternativeName>
            <fullName>Deoxyribonuclease V</fullName>
            <shortName>DNase V</shortName>
        </alternativeName>
    </domain>
</protein>
<accession>Q6KZ38</accession>
<keyword id="KW-0963">Cytoplasm</keyword>
<keyword id="KW-0227">DNA damage</keyword>
<keyword id="KW-0234">DNA repair</keyword>
<keyword id="KW-0255">Endonuclease</keyword>
<keyword id="KW-0378">Hydrolase</keyword>
<keyword id="KW-0460">Magnesium</keyword>
<keyword id="KW-0479">Metal-binding</keyword>
<keyword id="KW-0489">Methyltransferase</keyword>
<keyword id="KW-0511">Multifunctional enzyme</keyword>
<keyword id="KW-0540">Nuclease</keyword>
<keyword id="KW-0808">Transferase</keyword>
<sequence>MQSIDLYSYLYSLLGQIPEGMVTTYGDLAVALGDVKAARACGYMLSRNNDTENIPCYKVIMSDGSLGGYSLGIDEKIRRLRNDGIEINNGRIDLKRYRFNNFDSSYPLKRLQEEQEKIAGLAVYSDDYNEDKICAIDVSYKDEIGYSVMVSFENNEYDFKTFIKETRFPYIPGYLAYREFPYIKELGKNFDGTMIIDANGLLHPRRCGLATYVGVIMNKPSIGVAKSLLTGSIKNGYVYYNNMPLGYMINSRTIVSPGNRISLESSINFIRNLGKDHYPEILKIAHDRTVALRRNNII</sequence>
<feature type="chain" id="PRO_0000159698" description="Bifunctional methyltransferase/endonuclease">
    <location>
        <begin position="1"/>
        <end position="298"/>
    </location>
</feature>
<feature type="region of interest" description="Probable methylated-DNA--protein-cysteine methyltransferase">
    <location>
        <begin position="1"/>
        <end position="79"/>
    </location>
</feature>
<feature type="region of interest" description="Endonuclease V">
    <location>
        <begin position="80"/>
        <end position="298"/>
    </location>
</feature>
<feature type="active site" evidence="2">
    <location>
        <position position="56"/>
    </location>
</feature>
<feature type="binding site" evidence="1">
    <location>
        <position position="137"/>
    </location>
    <ligand>
        <name>Mg(2+)</name>
        <dbReference type="ChEBI" id="CHEBI:18420"/>
    </ligand>
</feature>
<feature type="binding site" evidence="1">
    <location>
        <position position="197"/>
    </location>
    <ligand>
        <name>Mg(2+)</name>
        <dbReference type="ChEBI" id="CHEBI:18420"/>
    </ligand>
</feature>
<feature type="site" description="Interaction with target DNA" evidence="1">
    <location>
        <position position="170"/>
    </location>
</feature>
<proteinExistence type="inferred from homology"/>
<comment type="function">
    <text evidence="1">DNA repair enzyme involved in the repair of deaminated bases. Selectively cleaves double-stranded DNA at the second phosphodiester bond 3' to a deoxyinosine leaving behind the intact lesion on the nicked DNA (By similarity).</text>
</comment>
<comment type="catalytic activity">
    <reaction>
        <text>Endonucleolytic cleavage at apurinic or apyrimidinic sites to products with a 5'-phosphate.</text>
        <dbReference type="EC" id="3.1.21.7"/>
    </reaction>
</comment>
<comment type="cofactor">
    <cofactor>
        <name>Mg(2+)</name>
        <dbReference type="ChEBI" id="CHEBI:18420"/>
    </cofactor>
</comment>
<comment type="subcellular location">
    <subcellularLocation>
        <location>Cytoplasm</location>
    </subcellularLocation>
</comment>
<comment type="similarity">
    <text evidence="3">In the N-terminal section; belongs to the MGMT family.</text>
</comment>
<comment type="similarity">
    <text evidence="3">In the C-terminal section; belongs to the endonuclease V family.</text>
</comment>
<dbReference type="EC" id="2.1.1.-"/>
<dbReference type="EC" id="3.1.21.7"/>
<dbReference type="EMBL" id="AE017261">
    <property type="protein sequence ID" value="AAT44014.1"/>
    <property type="molecule type" value="Genomic_DNA"/>
</dbReference>
<dbReference type="RefSeq" id="WP_011178230.1">
    <property type="nucleotide sequence ID" value="NC_005877.1"/>
</dbReference>
<dbReference type="SMR" id="Q6KZ38"/>
<dbReference type="FunCoup" id="Q6KZ38">
    <property type="interactions" value="4"/>
</dbReference>
<dbReference type="STRING" id="263820.PTO1429"/>
<dbReference type="PaxDb" id="263820-PTO1429"/>
<dbReference type="GeneID" id="2843979"/>
<dbReference type="KEGG" id="pto:PTO1429"/>
<dbReference type="PATRIC" id="fig|263820.9.peg.1483"/>
<dbReference type="eggNOG" id="arCOG00929">
    <property type="taxonomic scope" value="Archaea"/>
</dbReference>
<dbReference type="eggNOG" id="arCOG02724">
    <property type="taxonomic scope" value="Archaea"/>
</dbReference>
<dbReference type="HOGENOM" id="CLU_047631_1_1_2"/>
<dbReference type="InParanoid" id="Q6KZ38"/>
<dbReference type="OrthoDB" id="372118at2157"/>
<dbReference type="Proteomes" id="UP000000438">
    <property type="component" value="Chromosome"/>
</dbReference>
<dbReference type="GO" id="GO:0005737">
    <property type="term" value="C:cytoplasm"/>
    <property type="evidence" value="ECO:0007669"/>
    <property type="project" value="UniProtKB-SubCell"/>
</dbReference>
<dbReference type="GO" id="GO:0043737">
    <property type="term" value="F:deoxyribonuclease V activity"/>
    <property type="evidence" value="ECO:0007669"/>
    <property type="project" value="UniProtKB-EC"/>
</dbReference>
<dbReference type="GO" id="GO:0046872">
    <property type="term" value="F:metal ion binding"/>
    <property type="evidence" value="ECO:0007669"/>
    <property type="project" value="UniProtKB-KW"/>
</dbReference>
<dbReference type="GO" id="GO:0008168">
    <property type="term" value="F:methyltransferase activity"/>
    <property type="evidence" value="ECO:0007669"/>
    <property type="project" value="UniProtKB-KW"/>
</dbReference>
<dbReference type="GO" id="GO:0016891">
    <property type="term" value="F:RNA endonuclease activity, producing 5'-phosphomonoesters"/>
    <property type="evidence" value="ECO:0007669"/>
    <property type="project" value="TreeGrafter"/>
</dbReference>
<dbReference type="GO" id="GO:0003727">
    <property type="term" value="F:single-stranded RNA binding"/>
    <property type="evidence" value="ECO:0007669"/>
    <property type="project" value="TreeGrafter"/>
</dbReference>
<dbReference type="GO" id="GO:0006281">
    <property type="term" value="P:DNA repair"/>
    <property type="evidence" value="ECO:0007669"/>
    <property type="project" value="UniProtKB-KW"/>
</dbReference>
<dbReference type="GO" id="GO:0032259">
    <property type="term" value="P:methylation"/>
    <property type="evidence" value="ECO:0007669"/>
    <property type="project" value="UniProtKB-KW"/>
</dbReference>
<dbReference type="CDD" id="cd06445">
    <property type="entry name" value="ATase"/>
    <property type="match status" value="1"/>
</dbReference>
<dbReference type="CDD" id="cd06559">
    <property type="entry name" value="Endonuclease_V"/>
    <property type="match status" value="1"/>
</dbReference>
<dbReference type="Gene3D" id="3.30.2170.10">
    <property type="entry name" value="archaeoglobus fulgidus dsm 4304 superfamily"/>
    <property type="match status" value="1"/>
</dbReference>
<dbReference type="Gene3D" id="1.10.10.10">
    <property type="entry name" value="Winged helix-like DNA-binding domain superfamily/Winged helix DNA-binding domain"/>
    <property type="match status" value="1"/>
</dbReference>
<dbReference type="InterPro" id="IPR007581">
    <property type="entry name" value="Endonuclease-V"/>
</dbReference>
<dbReference type="InterPro" id="IPR014048">
    <property type="entry name" value="MethylDNA_cys_MeTrfase_DNA-bd"/>
</dbReference>
<dbReference type="InterPro" id="IPR036217">
    <property type="entry name" value="MethylDNA_cys_MeTrfase_DNAb"/>
</dbReference>
<dbReference type="InterPro" id="IPR036388">
    <property type="entry name" value="WH-like_DNA-bd_sf"/>
</dbReference>
<dbReference type="NCBIfam" id="TIGR00589">
    <property type="entry name" value="ogt"/>
    <property type="match status" value="1"/>
</dbReference>
<dbReference type="PANTHER" id="PTHR28511">
    <property type="entry name" value="ENDONUCLEASE V"/>
    <property type="match status" value="1"/>
</dbReference>
<dbReference type="PANTHER" id="PTHR28511:SF1">
    <property type="entry name" value="ENDONUCLEASE V"/>
    <property type="match status" value="1"/>
</dbReference>
<dbReference type="Pfam" id="PF01035">
    <property type="entry name" value="DNA_binding_1"/>
    <property type="match status" value="1"/>
</dbReference>
<dbReference type="Pfam" id="PF04493">
    <property type="entry name" value="Endonuclease_5"/>
    <property type="match status" value="1"/>
</dbReference>
<dbReference type="SUPFAM" id="SSF46767">
    <property type="entry name" value="Methylated DNA-protein cysteine methyltransferase, C-terminal domain"/>
    <property type="match status" value="1"/>
</dbReference>
<organism>
    <name type="scientific">Picrophilus torridus (strain ATCC 700027 / DSM 9790 / JCM 10055 / NBRC 100828 / KAW 2/3)</name>
    <dbReference type="NCBI Taxonomy" id="1122961"/>
    <lineage>
        <taxon>Archaea</taxon>
        <taxon>Methanobacteriati</taxon>
        <taxon>Thermoplasmatota</taxon>
        <taxon>Thermoplasmata</taxon>
        <taxon>Thermoplasmatales</taxon>
        <taxon>Picrophilaceae</taxon>
        <taxon>Picrophilus</taxon>
    </lineage>
</organism>
<name>NFI_PICTO</name>